<evidence type="ECO:0000255" key="1">
    <source>
        <dbReference type="HAMAP-Rule" id="MF_00142"/>
    </source>
</evidence>
<keyword id="KW-0408">Iron</keyword>
<keyword id="KW-0479">Metal-binding</keyword>
<keyword id="KW-1185">Reference proteome</keyword>
<accession>Q88CF6</accession>
<comment type="function">
    <text evidence="1">Involved in iron-sulfur (Fe-S) cluster assembly. May act as a regulator of Fe-S biogenesis.</text>
</comment>
<comment type="similarity">
    <text evidence="1">Belongs to the frataxin family.</text>
</comment>
<proteinExistence type="inferred from homology"/>
<organism>
    <name type="scientific">Pseudomonas putida (strain ATCC 47054 / DSM 6125 / CFBP 8728 / NCIMB 11950 / KT2440)</name>
    <dbReference type="NCBI Taxonomy" id="160488"/>
    <lineage>
        <taxon>Bacteria</taxon>
        <taxon>Pseudomonadati</taxon>
        <taxon>Pseudomonadota</taxon>
        <taxon>Gammaproteobacteria</taxon>
        <taxon>Pseudomonadales</taxon>
        <taxon>Pseudomonadaceae</taxon>
        <taxon>Pseudomonas</taxon>
    </lineage>
</organism>
<dbReference type="EMBL" id="AE015451">
    <property type="protein sequence ID" value="AAN70790.1"/>
    <property type="molecule type" value="Genomic_DNA"/>
</dbReference>
<dbReference type="RefSeq" id="NP_747326.1">
    <property type="nucleotide sequence ID" value="NC_002947.4"/>
</dbReference>
<dbReference type="RefSeq" id="WP_004575827.1">
    <property type="nucleotide sequence ID" value="NZ_CP169744.1"/>
</dbReference>
<dbReference type="SMR" id="Q88CF6"/>
<dbReference type="STRING" id="160488.PP_5225"/>
<dbReference type="PaxDb" id="160488-PP_5225"/>
<dbReference type="GeneID" id="97170596"/>
<dbReference type="KEGG" id="ppu:PP_5225"/>
<dbReference type="PATRIC" id="fig|160488.4.peg.5573"/>
<dbReference type="eggNOG" id="COG1965">
    <property type="taxonomic scope" value="Bacteria"/>
</dbReference>
<dbReference type="HOGENOM" id="CLU_080880_3_0_6"/>
<dbReference type="OrthoDB" id="285675at2"/>
<dbReference type="PhylomeDB" id="Q88CF6"/>
<dbReference type="BioCyc" id="PPUT160488:G1G01-5576-MONOMER"/>
<dbReference type="Proteomes" id="UP000000556">
    <property type="component" value="Chromosome"/>
</dbReference>
<dbReference type="GO" id="GO:0005829">
    <property type="term" value="C:cytosol"/>
    <property type="evidence" value="ECO:0007669"/>
    <property type="project" value="TreeGrafter"/>
</dbReference>
<dbReference type="GO" id="GO:0008199">
    <property type="term" value="F:ferric iron binding"/>
    <property type="evidence" value="ECO:0007669"/>
    <property type="project" value="InterPro"/>
</dbReference>
<dbReference type="GO" id="GO:0008198">
    <property type="term" value="F:ferrous iron binding"/>
    <property type="evidence" value="ECO:0007669"/>
    <property type="project" value="TreeGrafter"/>
</dbReference>
<dbReference type="GO" id="GO:0016226">
    <property type="term" value="P:iron-sulfur cluster assembly"/>
    <property type="evidence" value="ECO:0007669"/>
    <property type="project" value="UniProtKB-UniRule"/>
</dbReference>
<dbReference type="Gene3D" id="3.30.920.10">
    <property type="entry name" value="Frataxin/CyaY"/>
    <property type="match status" value="1"/>
</dbReference>
<dbReference type="HAMAP" id="MF_00142">
    <property type="entry name" value="CyaY"/>
    <property type="match status" value="1"/>
</dbReference>
<dbReference type="InterPro" id="IPR047584">
    <property type="entry name" value="CyaY"/>
</dbReference>
<dbReference type="InterPro" id="IPR002908">
    <property type="entry name" value="Frataxin/CyaY"/>
</dbReference>
<dbReference type="InterPro" id="IPR036524">
    <property type="entry name" value="Frataxin/CyaY_sf"/>
</dbReference>
<dbReference type="InterPro" id="IPR020895">
    <property type="entry name" value="Frataxin_CS"/>
</dbReference>
<dbReference type="NCBIfam" id="TIGR03421">
    <property type="entry name" value="FeS_CyaY"/>
    <property type="match status" value="1"/>
</dbReference>
<dbReference type="PANTHER" id="PTHR16821">
    <property type="entry name" value="FRATAXIN"/>
    <property type="match status" value="1"/>
</dbReference>
<dbReference type="PANTHER" id="PTHR16821:SF2">
    <property type="entry name" value="FRATAXIN, MITOCHONDRIAL"/>
    <property type="match status" value="1"/>
</dbReference>
<dbReference type="Pfam" id="PF01491">
    <property type="entry name" value="Frataxin_Cyay"/>
    <property type="match status" value="1"/>
</dbReference>
<dbReference type="SMART" id="SM01219">
    <property type="entry name" value="Frataxin_Cyay"/>
    <property type="match status" value="1"/>
</dbReference>
<dbReference type="SUPFAM" id="SSF55387">
    <property type="entry name" value="Frataxin/Nqo15-like"/>
    <property type="match status" value="1"/>
</dbReference>
<dbReference type="PROSITE" id="PS01344">
    <property type="entry name" value="FRATAXIN_1"/>
    <property type="match status" value="1"/>
</dbReference>
<dbReference type="PROSITE" id="PS50810">
    <property type="entry name" value="FRATAXIN_2"/>
    <property type="match status" value="1"/>
</dbReference>
<name>CYAY_PSEPK</name>
<gene>
    <name evidence="1" type="primary">cyaY</name>
    <name type="ordered locus">PP_5225</name>
</gene>
<protein>
    <recommendedName>
        <fullName evidence="1">Iron-sulfur cluster assembly protein CyaY</fullName>
    </recommendedName>
</protein>
<feature type="chain" id="PRO_0000193952" description="Iron-sulfur cluster assembly protein CyaY">
    <location>
        <begin position="1"/>
        <end position="110"/>
    </location>
</feature>
<sequence>MSLSEARFHDLVDATQQALEDLFDESGLDLDMENSAGVLTVKFEGGAQLIFSRQEPLRQLWLADRSGGFHFDYDEDSGKWVCEKSEELLGEMLERIVWERAGEKLDFDEI</sequence>
<reference key="1">
    <citation type="journal article" date="2002" name="Environ. Microbiol.">
        <title>Complete genome sequence and comparative analysis of the metabolically versatile Pseudomonas putida KT2440.</title>
        <authorList>
            <person name="Nelson K.E."/>
            <person name="Weinel C."/>
            <person name="Paulsen I.T."/>
            <person name="Dodson R.J."/>
            <person name="Hilbert H."/>
            <person name="Martins dos Santos V.A.P."/>
            <person name="Fouts D.E."/>
            <person name="Gill S.R."/>
            <person name="Pop M."/>
            <person name="Holmes M."/>
            <person name="Brinkac L.M."/>
            <person name="Beanan M.J."/>
            <person name="DeBoy R.T."/>
            <person name="Daugherty S.C."/>
            <person name="Kolonay J.F."/>
            <person name="Madupu R."/>
            <person name="Nelson W.C."/>
            <person name="White O."/>
            <person name="Peterson J.D."/>
            <person name="Khouri H.M."/>
            <person name="Hance I."/>
            <person name="Chris Lee P."/>
            <person name="Holtzapple E.K."/>
            <person name="Scanlan D."/>
            <person name="Tran K."/>
            <person name="Moazzez A."/>
            <person name="Utterback T.R."/>
            <person name="Rizzo M."/>
            <person name="Lee K."/>
            <person name="Kosack D."/>
            <person name="Moestl D."/>
            <person name="Wedler H."/>
            <person name="Lauber J."/>
            <person name="Stjepandic D."/>
            <person name="Hoheisel J."/>
            <person name="Straetz M."/>
            <person name="Heim S."/>
            <person name="Kiewitz C."/>
            <person name="Eisen J.A."/>
            <person name="Timmis K.N."/>
            <person name="Duesterhoeft A."/>
            <person name="Tuemmler B."/>
            <person name="Fraser C.M."/>
        </authorList>
    </citation>
    <scope>NUCLEOTIDE SEQUENCE [LARGE SCALE GENOMIC DNA]</scope>
    <source>
        <strain>ATCC 47054 / DSM 6125 / CFBP 8728 / NCIMB 11950 / KT2440</strain>
    </source>
</reference>